<sequence>MGQFTVVSLGLLAMFLSLSGAKGDNCPASWISRNGVCNKLFPDRKTWLEAEMYCRALKPGCHLASLHRDSDSTVLAWYISDHFKGAGHVWIGLRDTNRKRTWKWSDRTSTNYFSWNQGEPNNVQDNENCVHLWAPSGYLKWNDEPCASLHPFICQYKL</sequence>
<proteinExistence type="evidence at transcript level"/>
<organism>
    <name type="scientific">Pseudoferania polylepis</name>
    <name type="common">Macleay's water snake</name>
    <name type="synonym">Enhydris polylepis</name>
    <dbReference type="NCBI Taxonomy" id="338839"/>
    <lineage>
        <taxon>Eukaryota</taxon>
        <taxon>Metazoa</taxon>
        <taxon>Chordata</taxon>
        <taxon>Craniata</taxon>
        <taxon>Vertebrata</taxon>
        <taxon>Euteleostomi</taxon>
        <taxon>Lepidosauria</taxon>
        <taxon>Squamata</taxon>
        <taxon>Bifurcata</taxon>
        <taxon>Unidentata</taxon>
        <taxon>Episquamata</taxon>
        <taxon>Toxicofera</taxon>
        <taxon>Serpentes</taxon>
        <taxon>Colubroidea</taxon>
        <taxon>Homalopsidae</taxon>
        <taxon>Pseudoferania</taxon>
    </lineage>
</organism>
<comment type="function">
    <text evidence="1">Mannose-binding lectin which recognizes specific carbohydrate structures and agglutinates a variety of animal cells by binding to cell-surface glycoproteins and glycolipids. May be a calcium-dependent lectin (By similarity).</text>
</comment>
<comment type="subcellular location">
    <subcellularLocation>
        <location evidence="1">Secreted</location>
    </subcellularLocation>
</comment>
<comment type="tissue specificity">
    <text>Expressed by the venom gland.</text>
</comment>
<comment type="similarity">
    <text evidence="4">Belongs to the true venom lectin family.</text>
</comment>
<reference key="1">
    <citation type="journal article" date="2008" name="Mol. Cell. Proteomics">
        <title>Evolution of an arsenal: structural and functional diversification of the venom system in the advanced snakes (Caenophidia).</title>
        <authorList>
            <person name="Fry B.G."/>
            <person name="Scheib H."/>
            <person name="van der Weerd L."/>
            <person name="Young B."/>
            <person name="McNaughtan J."/>
            <person name="Ramjan S.F.R."/>
            <person name="Vidal N."/>
            <person name="Poelmann R.E."/>
            <person name="Norman J.A."/>
        </authorList>
    </citation>
    <scope>NUCLEOTIDE SEQUENCE [MRNA]</scope>
    <source>
        <tissue>Venom gland</tissue>
    </source>
</reference>
<feature type="signal peptide" evidence="2">
    <location>
        <begin position="1"/>
        <end position="23"/>
    </location>
</feature>
<feature type="chain" id="PRO_0000356309" description="C-type lection lectoxin-Enh3">
    <location>
        <begin position="24"/>
        <end position="158"/>
    </location>
</feature>
<feature type="domain" description="C-type lectin" evidence="3">
    <location>
        <begin position="33"/>
        <end position="155"/>
    </location>
</feature>
<feature type="short sequence motif" description="Mannose-binding">
    <location>
        <begin position="119"/>
        <end position="121"/>
    </location>
</feature>
<feature type="binding site" evidence="1">
    <location>
        <position position="127"/>
    </location>
    <ligand>
        <name>Ca(2+)</name>
        <dbReference type="ChEBI" id="CHEBI:29108"/>
    </ligand>
</feature>
<feature type="binding site" evidence="1">
    <location>
        <position position="142"/>
    </location>
    <ligand>
        <name>Ca(2+)</name>
        <dbReference type="ChEBI" id="CHEBI:29108"/>
    </ligand>
</feature>
<feature type="binding site" evidence="1">
    <location>
        <position position="143"/>
    </location>
    <ligand>
        <name>Ca(2+)</name>
        <dbReference type="ChEBI" id="CHEBI:29108"/>
    </ligand>
</feature>
<feature type="disulfide bond" evidence="3">
    <location>
        <begin position="26"/>
        <end position="37"/>
    </location>
</feature>
<feature type="disulfide bond" evidence="3">
    <location>
        <begin position="54"/>
        <end position="154"/>
    </location>
</feature>
<feature type="disulfide bond" evidence="3">
    <location>
        <begin position="129"/>
        <end position="146"/>
    </location>
</feature>
<accession>A7X3X0</accession>
<name>LECM3_PSEPL</name>
<dbReference type="EMBL" id="EU029691">
    <property type="protein sequence ID" value="ABU68491.1"/>
    <property type="molecule type" value="mRNA"/>
</dbReference>
<dbReference type="SMR" id="A7X3X0"/>
<dbReference type="GO" id="GO:0005576">
    <property type="term" value="C:extracellular region"/>
    <property type="evidence" value="ECO:0007669"/>
    <property type="project" value="UniProtKB-SubCell"/>
</dbReference>
<dbReference type="GO" id="GO:0030246">
    <property type="term" value="F:carbohydrate binding"/>
    <property type="evidence" value="ECO:0007669"/>
    <property type="project" value="UniProtKB-KW"/>
</dbReference>
<dbReference type="GO" id="GO:0046872">
    <property type="term" value="F:metal ion binding"/>
    <property type="evidence" value="ECO:0007669"/>
    <property type="project" value="UniProtKB-KW"/>
</dbReference>
<dbReference type="GO" id="GO:0090729">
    <property type="term" value="F:toxin activity"/>
    <property type="evidence" value="ECO:0007669"/>
    <property type="project" value="UniProtKB-KW"/>
</dbReference>
<dbReference type="FunFam" id="3.10.100.10:FF:000015">
    <property type="entry name" value="C-type lectin Cal"/>
    <property type="match status" value="1"/>
</dbReference>
<dbReference type="Gene3D" id="3.10.100.10">
    <property type="entry name" value="Mannose-Binding Protein A, subunit A"/>
    <property type="match status" value="1"/>
</dbReference>
<dbReference type="InterPro" id="IPR001304">
    <property type="entry name" value="C-type_lectin-like"/>
</dbReference>
<dbReference type="InterPro" id="IPR016186">
    <property type="entry name" value="C-type_lectin-like/link_sf"/>
</dbReference>
<dbReference type="InterPro" id="IPR050111">
    <property type="entry name" value="C-type_lectin/snaclec_domain"/>
</dbReference>
<dbReference type="InterPro" id="IPR018378">
    <property type="entry name" value="C-type_lectin_CS"/>
</dbReference>
<dbReference type="InterPro" id="IPR016187">
    <property type="entry name" value="CTDL_fold"/>
</dbReference>
<dbReference type="PANTHER" id="PTHR22803">
    <property type="entry name" value="MANNOSE, PHOSPHOLIPASE, LECTIN RECEPTOR RELATED"/>
    <property type="match status" value="1"/>
</dbReference>
<dbReference type="Pfam" id="PF00059">
    <property type="entry name" value="Lectin_C"/>
    <property type="match status" value="1"/>
</dbReference>
<dbReference type="PRINTS" id="PR01504">
    <property type="entry name" value="PNCREATITSAP"/>
</dbReference>
<dbReference type="SMART" id="SM00034">
    <property type="entry name" value="CLECT"/>
    <property type="match status" value="1"/>
</dbReference>
<dbReference type="SUPFAM" id="SSF56436">
    <property type="entry name" value="C-type lectin-like"/>
    <property type="match status" value="1"/>
</dbReference>
<dbReference type="PROSITE" id="PS00615">
    <property type="entry name" value="C_TYPE_LECTIN_1"/>
    <property type="match status" value="1"/>
</dbReference>
<dbReference type="PROSITE" id="PS50041">
    <property type="entry name" value="C_TYPE_LECTIN_2"/>
    <property type="match status" value="1"/>
</dbReference>
<protein>
    <recommendedName>
        <fullName>C-type lection lectoxin-Enh3</fullName>
        <shortName>CTL</shortName>
    </recommendedName>
</protein>
<keyword id="KW-0106">Calcium</keyword>
<keyword id="KW-1015">Disulfide bond</keyword>
<keyword id="KW-0348">Hemagglutinin</keyword>
<keyword id="KW-0430">Lectin</keyword>
<keyword id="KW-0479">Metal-binding</keyword>
<keyword id="KW-0964">Secreted</keyword>
<keyword id="KW-0732">Signal</keyword>
<keyword id="KW-0800">Toxin</keyword>
<evidence type="ECO:0000250" key="1"/>
<evidence type="ECO:0000255" key="2"/>
<evidence type="ECO:0000255" key="3">
    <source>
        <dbReference type="PROSITE-ProRule" id="PRU00040"/>
    </source>
</evidence>
<evidence type="ECO:0000305" key="4"/>